<proteinExistence type="inferred from homology"/>
<accession>P31181</accession>
<protein>
    <recommendedName>
        <fullName>Ribulose bisphosphate carboxylase large chain</fullName>
        <shortName>RuBisCO large subunit</shortName>
        <ecNumber>4.1.1.39</ecNumber>
    </recommendedName>
</protein>
<feature type="propeptide" id="PRO_0000031155" evidence="1">
    <location>
        <begin position="1"/>
        <end position="2"/>
    </location>
</feature>
<feature type="chain" id="PRO_0000031156" description="Ribulose bisphosphate carboxylase large chain">
    <location>
        <begin position="3"/>
        <end position="57" status="greater than"/>
    </location>
</feature>
<feature type="modified residue" description="N-acetylproline" evidence="1">
    <location>
        <position position="3"/>
    </location>
</feature>
<feature type="modified residue" description="N6,N6,N6-trimethyllysine" evidence="1">
    <location>
        <position position="14"/>
    </location>
</feature>
<feature type="non-terminal residue">
    <location>
        <position position="57"/>
    </location>
</feature>
<name>RBL_CAMSI</name>
<evidence type="ECO:0000250" key="1"/>
<evidence type="ECO:0000305" key="2"/>
<keyword id="KW-0007">Acetylation</keyword>
<keyword id="KW-0113">Calvin cycle</keyword>
<keyword id="KW-0120">Carbon dioxide fixation</keyword>
<keyword id="KW-0150">Chloroplast</keyword>
<keyword id="KW-0456">Lyase</keyword>
<keyword id="KW-0488">Methylation</keyword>
<keyword id="KW-0503">Monooxygenase</keyword>
<keyword id="KW-0560">Oxidoreductase</keyword>
<keyword id="KW-0601">Photorespiration</keyword>
<keyword id="KW-0602">Photosynthesis</keyword>
<keyword id="KW-0934">Plastid</keyword>
<reference key="1">
    <citation type="journal article" date="1994" name="Mol. Phylogenet. Evol.">
        <title>Molecular phylogeny of families related to Celastrales based on rbcL 5' flanking sequences.</title>
        <authorList>
            <person name="Savolainen V."/>
            <person name="Manen J.F."/>
            <person name="Douzery E.J.P."/>
            <person name="Spichiger R."/>
        </authorList>
    </citation>
    <scope>NUCLEOTIDE SEQUENCE [GENOMIC DNA]</scope>
    <source>
        <strain>Sample SSI2</strain>
    </source>
</reference>
<gene>
    <name type="primary">rbcL</name>
</gene>
<geneLocation type="chloroplast"/>
<dbReference type="EC" id="4.1.1.39"/>
<dbReference type="EMBL" id="X69732">
    <property type="protein sequence ID" value="CAA49387.1"/>
    <property type="molecule type" value="Genomic_DNA"/>
</dbReference>
<dbReference type="PIR" id="S31545">
    <property type="entry name" value="S31545"/>
</dbReference>
<dbReference type="SMR" id="P31181"/>
<dbReference type="GO" id="GO:0009507">
    <property type="term" value="C:chloroplast"/>
    <property type="evidence" value="ECO:0007669"/>
    <property type="project" value="UniProtKB-SubCell"/>
</dbReference>
<dbReference type="GO" id="GO:0004497">
    <property type="term" value="F:monooxygenase activity"/>
    <property type="evidence" value="ECO:0007669"/>
    <property type="project" value="UniProtKB-KW"/>
</dbReference>
<dbReference type="GO" id="GO:0016984">
    <property type="term" value="F:ribulose-bisphosphate carboxylase activity"/>
    <property type="evidence" value="ECO:0007669"/>
    <property type="project" value="UniProtKB-EC"/>
</dbReference>
<dbReference type="GO" id="GO:0009853">
    <property type="term" value="P:photorespiration"/>
    <property type="evidence" value="ECO:0007669"/>
    <property type="project" value="UniProtKB-KW"/>
</dbReference>
<dbReference type="GO" id="GO:0019253">
    <property type="term" value="P:reductive pentose-phosphate cycle"/>
    <property type="evidence" value="ECO:0007669"/>
    <property type="project" value="UniProtKB-KW"/>
</dbReference>
<dbReference type="Gene3D" id="3.30.70.150">
    <property type="entry name" value="RuBisCO large subunit, N-terminal domain"/>
    <property type="match status" value="1"/>
</dbReference>
<dbReference type="InterPro" id="IPR033966">
    <property type="entry name" value="RuBisCO"/>
</dbReference>
<dbReference type="InterPro" id="IPR017443">
    <property type="entry name" value="RuBisCO_lsu_fd_N"/>
</dbReference>
<dbReference type="InterPro" id="IPR036422">
    <property type="entry name" value="RuBisCO_lsu_N_sf"/>
</dbReference>
<dbReference type="PANTHER" id="PTHR42704">
    <property type="entry name" value="RIBULOSE BISPHOSPHATE CARBOXYLASE"/>
    <property type="match status" value="1"/>
</dbReference>
<dbReference type="PANTHER" id="PTHR42704:SF15">
    <property type="entry name" value="RIBULOSE BISPHOSPHATE CARBOXYLASE LARGE CHAIN"/>
    <property type="match status" value="1"/>
</dbReference>
<dbReference type="Pfam" id="PF02788">
    <property type="entry name" value="RuBisCO_large_N"/>
    <property type="match status" value="1"/>
</dbReference>
<dbReference type="SUPFAM" id="SSF54966">
    <property type="entry name" value="RuBisCO, large subunit, small (N-terminal) domain"/>
    <property type="match status" value="1"/>
</dbReference>
<comment type="function">
    <text evidence="1">RuBisCO catalyzes two reactions: the carboxylation of D-ribulose 1,5-bisphosphate, the primary event in carbon dioxide fixation, as well as the oxidative fragmentation of the pentose substrate in the photorespiration process. Both reactions occur simultaneously and in competition at the same active site (By similarity).</text>
</comment>
<comment type="catalytic activity">
    <reaction>
        <text>2 (2R)-3-phosphoglycerate + 2 H(+) = D-ribulose 1,5-bisphosphate + CO2 + H2O</text>
        <dbReference type="Rhea" id="RHEA:23124"/>
        <dbReference type="ChEBI" id="CHEBI:15377"/>
        <dbReference type="ChEBI" id="CHEBI:15378"/>
        <dbReference type="ChEBI" id="CHEBI:16526"/>
        <dbReference type="ChEBI" id="CHEBI:57870"/>
        <dbReference type="ChEBI" id="CHEBI:58272"/>
        <dbReference type="EC" id="4.1.1.39"/>
    </reaction>
</comment>
<comment type="catalytic activity">
    <reaction>
        <text>D-ribulose 1,5-bisphosphate + O2 = 2-phosphoglycolate + (2R)-3-phosphoglycerate + 2 H(+)</text>
        <dbReference type="Rhea" id="RHEA:36631"/>
        <dbReference type="ChEBI" id="CHEBI:15378"/>
        <dbReference type="ChEBI" id="CHEBI:15379"/>
        <dbReference type="ChEBI" id="CHEBI:57870"/>
        <dbReference type="ChEBI" id="CHEBI:58033"/>
        <dbReference type="ChEBI" id="CHEBI:58272"/>
    </reaction>
</comment>
<comment type="subunit">
    <text evidence="1">Heterohexadecamer of 8 large chains and 8 small chains.</text>
</comment>
<comment type="subcellular location">
    <subcellularLocation>
        <location>Plastid</location>
        <location>Chloroplast</location>
    </subcellularLocation>
</comment>
<comment type="miscellaneous">
    <text evidence="1">The basic functional RuBisCO is composed of a large chain homodimer in a 'head-to-tail' conformation. In form I RuBisCO this homodimer is arranged in a barrel-like tetramer with the small subunits forming a tetrameric 'cap' on each end of the 'barrel' (By similarity).</text>
</comment>
<comment type="similarity">
    <text evidence="2">Belongs to the RuBisCO large chain family. Type I subfamily.</text>
</comment>
<organism>
    <name type="scientific">Camellia sinensis</name>
    <name type="common">Tea plant</name>
    <name type="synonym">Thea sinensis</name>
    <dbReference type="NCBI Taxonomy" id="4442"/>
    <lineage>
        <taxon>Eukaryota</taxon>
        <taxon>Viridiplantae</taxon>
        <taxon>Streptophyta</taxon>
        <taxon>Embryophyta</taxon>
        <taxon>Tracheophyta</taxon>
        <taxon>Spermatophyta</taxon>
        <taxon>Magnoliopsida</taxon>
        <taxon>eudicotyledons</taxon>
        <taxon>Gunneridae</taxon>
        <taxon>Pentapetalae</taxon>
        <taxon>asterids</taxon>
        <taxon>Ericales</taxon>
        <taxon>Theaceae</taxon>
        <taxon>Camellia</taxon>
    </lineage>
</organism>
<sequence>MSPQTETKASVGFKAGVKDYKLTYYTPDYETKDTDILAAFRVTPQPGVPPEEAGAAV</sequence>